<dbReference type="EC" id="2.2.1.2"/>
<dbReference type="EMBL" id="AE014074">
    <property type="protein sequence ID" value="AAM80070.1"/>
    <property type="molecule type" value="Genomic_DNA"/>
</dbReference>
<dbReference type="SMR" id="P0DG12"/>
<dbReference type="KEGG" id="spg:SpyM3_1463"/>
<dbReference type="HOGENOM" id="CLU_079764_0_0_9"/>
<dbReference type="UniPathway" id="UPA00115">
    <property type="reaction ID" value="UER00414"/>
</dbReference>
<dbReference type="Proteomes" id="UP000000564">
    <property type="component" value="Chromosome"/>
</dbReference>
<dbReference type="GO" id="GO:0005737">
    <property type="term" value="C:cytoplasm"/>
    <property type="evidence" value="ECO:0007669"/>
    <property type="project" value="UniProtKB-SubCell"/>
</dbReference>
<dbReference type="GO" id="GO:0016832">
    <property type="term" value="F:aldehyde-lyase activity"/>
    <property type="evidence" value="ECO:0007669"/>
    <property type="project" value="InterPro"/>
</dbReference>
<dbReference type="GO" id="GO:0004801">
    <property type="term" value="F:transaldolase activity"/>
    <property type="evidence" value="ECO:0007669"/>
    <property type="project" value="UniProtKB-UniRule"/>
</dbReference>
<dbReference type="GO" id="GO:0005975">
    <property type="term" value="P:carbohydrate metabolic process"/>
    <property type="evidence" value="ECO:0007669"/>
    <property type="project" value="InterPro"/>
</dbReference>
<dbReference type="GO" id="GO:0006098">
    <property type="term" value="P:pentose-phosphate shunt"/>
    <property type="evidence" value="ECO:0007669"/>
    <property type="project" value="UniProtKB-UniRule"/>
</dbReference>
<dbReference type="CDD" id="cd00956">
    <property type="entry name" value="Transaldolase_FSA"/>
    <property type="match status" value="1"/>
</dbReference>
<dbReference type="FunFam" id="3.20.20.70:FF:000018">
    <property type="entry name" value="Probable transaldolase"/>
    <property type="match status" value="1"/>
</dbReference>
<dbReference type="Gene3D" id="3.20.20.70">
    <property type="entry name" value="Aldolase class I"/>
    <property type="match status" value="1"/>
</dbReference>
<dbReference type="HAMAP" id="MF_00494">
    <property type="entry name" value="Transaldolase_3b"/>
    <property type="match status" value="1"/>
</dbReference>
<dbReference type="InterPro" id="IPR013785">
    <property type="entry name" value="Aldolase_TIM"/>
</dbReference>
<dbReference type="InterPro" id="IPR001585">
    <property type="entry name" value="TAL/FSA"/>
</dbReference>
<dbReference type="InterPro" id="IPR022999">
    <property type="entry name" value="Transaldolase_3B"/>
</dbReference>
<dbReference type="InterPro" id="IPR004731">
    <property type="entry name" value="Transaldolase_3B/F6P_aldolase"/>
</dbReference>
<dbReference type="InterPro" id="IPR018225">
    <property type="entry name" value="Transaldolase_AS"/>
</dbReference>
<dbReference type="InterPro" id="IPR033919">
    <property type="entry name" value="TSA/FSA_arc/bac"/>
</dbReference>
<dbReference type="NCBIfam" id="TIGR00875">
    <property type="entry name" value="fsa_talC_mipB"/>
    <property type="match status" value="1"/>
</dbReference>
<dbReference type="PANTHER" id="PTHR10683">
    <property type="entry name" value="TRANSALDOLASE"/>
    <property type="match status" value="1"/>
</dbReference>
<dbReference type="PANTHER" id="PTHR10683:SF36">
    <property type="entry name" value="TRANSALDOLASE"/>
    <property type="match status" value="1"/>
</dbReference>
<dbReference type="Pfam" id="PF00923">
    <property type="entry name" value="TAL_FSA"/>
    <property type="match status" value="1"/>
</dbReference>
<dbReference type="SUPFAM" id="SSF51569">
    <property type="entry name" value="Aldolase"/>
    <property type="match status" value="1"/>
</dbReference>
<dbReference type="PROSITE" id="PS01054">
    <property type="entry name" value="TRANSALDOLASE_1"/>
    <property type="match status" value="1"/>
</dbReference>
<dbReference type="PROSITE" id="PS00958">
    <property type="entry name" value="TRANSALDOLASE_2"/>
    <property type="match status" value="1"/>
</dbReference>
<proteinExistence type="inferred from homology"/>
<feature type="chain" id="PRO_0000173684" description="Probable transaldolase">
    <location>
        <begin position="1"/>
        <end position="214"/>
    </location>
</feature>
<feature type="active site" description="Schiff-base intermediate with substrate" evidence="1">
    <location>
        <position position="83"/>
    </location>
</feature>
<name>TAL_STRP3</name>
<comment type="function">
    <text evidence="1">Transaldolase is important for the balance of metabolites in the pentose-phosphate pathway.</text>
</comment>
<comment type="catalytic activity">
    <reaction>
        <text>D-sedoheptulose 7-phosphate + D-glyceraldehyde 3-phosphate = D-erythrose 4-phosphate + beta-D-fructose 6-phosphate</text>
        <dbReference type="Rhea" id="RHEA:17053"/>
        <dbReference type="ChEBI" id="CHEBI:16897"/>
        <dbReference type="ChEBI" id="CHEBI:57483"/>
        <dbReference type="ChEBI" id="CHEBI:57634"/>
        <dbReference type="ChEBI" id="CHEBI:59776"/>
        <dbReference type="EC" id="2.2.1.2"/>
    </reaction>
</comment>
<comment type="pathway">
    <text>Carbohydrate degradation; pentose phosphate pathway; D-glyceraldehyde 3-phosphate and beta-D-fructose 6-phosphate from D-ribose 5-phosphate and D-xylulose 5-phosphate (non-oxidative stage): step 2/3.</text>
</comment>
<comment type="subcellular location">
    <subcellularLocation>
        <location evidence="1">Cytoplasm</location>
    </subcellularLocation>
</comment>
<comment type="similarity">
    <text evidence="2">Belongs to the transaldolase family. Type 3B subfamily.</text>
</comment>
<reference key="1">
    <citation type="journal article" date="2002" name="Proc. Natl. Acad. Sci. U.S.A.">
        <title>Genome sequence of a serotype M3 strain of group A Streptococcus: phage-encoded toxins, the high-virulence phenotype, and clone emergence.</title>
        <authorList>
            <person name="Beres S.B."/>
            <person name="Sylva G.L."/>
            <person name="Barbian K.D."/>
            <person name="Lei B."/>
            <person name="Hoff J.S."/>
            <person name="Mammarella N.D."/>
            <person name="Liu M.-Y."/>
            <person name="Smoot J.C."/>
            <person name="Porcella S.F."/>
            <person name="Parkins L.D."/>
            <person name="Campbell D.S."/>
            <person name="Smith T.M."/>
            <person name="McCormick J.K."/>
            <person name="Leung D.Y.M."/>
            <person name="Schlievert P.M."/>
            <person name="Musser J.M."/>
        </authorList>
    </citation>
    <scope>NUCLEOTIDE SEQUENCE [LARGE SCALE GENOMIC DNA]</scope>
    <source>
        <strain>ATCC BAA-595 / MGAS315</strain>
    </source>
</reference>
<gene>
    <name type="primary">tal</name>
    <name type="ordered locus">SpyM3_1463</name>
</gene>
<accession>P0DG12</accession>
<accession>P66960</accession>
<accession>Q99YJ2</accession>
<sequence length="214" mass="23272">MKFFLDTANVAAIKAINELGVVDGVTTNPTIISREGRDFETVIKEICDIVDGPISAEVTGLTADAMVEEARSIAKWHDNVVVKIPMTTEGLKATNILSKEGIKTNVTLIFTVSQGLMAMKAGATYISPFIGRLEDIGTDAYQLISDLREIIDLYDFQAEIIAASIRTTAHVEAVAKLGAHIATIPDPLFAKMTQHPLTTNGLKTFMEDWASFKK</sequence>
<keyword id="KW-0963">Cytoplasm</keyword>
<keyword id="KW-0570">Pentose shunt</keyword>
<keyword id="KW-0704">Schiff base</keyword>
<keyword id="KW-0808">Transferase</keyword>
<organism>
    <name type="scientific">Streptococcus pyogenes serotype M3 (strain ATCC BAA-595 / MGAS315)</name>
    <dbReference type="NCBI Taxonomy" id="198466"/>
    <lineage>
        <taxon>Bacteria</taxon>
        <taxon>Bacillati</taxon>
        <taxon>Bacillota</taxon>
        <taxon>Bacilli</taxon>
        <taxon>Lactobacillales</taxon>
        <taxon>Streptococcaceae</taxon>
        <taxon>Streptococcus</taxon>
    </lineage>
</organism>
<protein>
    <recommendedName>
        <fullName>Probable transaldolase</fullName>
        <ecNumber>2.2.1.2</ecNumber>
    </recommendedName>
</protein>
<evidence type="ECO:0000250" key="1"/>
<evidence type="ECO:0000305" key="2"/>